<comment type="function">
    <text evidence="1">Involved in the biosynthesis of the central metabolite phospho-alpha-D-ribosyl-1-pyrophosphate (PRPP) via the transfer of pyrophosphoryl group from ATP to 1-hydroxyl of ribose-5-phosphate (Rib-5-P).</text>
</comment>
<comment type="catalytic activity">
    <reaction evidence="1">
        <text>D-ribose 5-phosphate + ATP = 5-phospho-alpha-D-ribose 1-diphosphate + AMP + H(+)</text>
        <dbReference type="Rhea" id="RHEA:15609"/>
        <dbReference type="ChEBI" id="CHEBI:15378"/>
        <dbReference type="ChEBI" id="CHEBI:30616"/>
        <dbReference type="ChEBI" id="CHEBI:58017"/>
        <dbReference type="ChEBI" id="CHEBI:78346"/>
        <dbReference type="ChEBI" id="CHEBI:456215"/>
        <dbReference type="EC" id="2.7.6.1"/>
    </reaction>
</comment>
<comment type="cofactor">
    <cofactor evidence="1">
        <name>Mg(2+)</name>
        <dbReference type="ChEBI" id="CHEBI:18420"/>
    </cofactor>
    <text evidence="1">Binds 2 Mg(2+) ions per subunit.</text>
</comment>
<comment type="pathway">
    <text evidence="1">Metabolic intermediate biosynthesis; 5-phospho-alpha-D-ribose 1-diphosphate biosynthesis; 5-phospho-alpha-D-ribose 1-diphosphate from D-ribose 5-phosphate (route I): step 1/1.</text>
</comment>
<comment type="subunit">
    <text evidence="1">Homohexamer.</text>
</comment>
<comment type="subcellular location">
    <subcellularLocation>
        <location evidence="1">Cytoplasm</location>
    </subcellularLocation>
</comment>
<comment type="similarity">
    <text evidence="1">Belongs to the ribose-phosphate pyrophosphokinase family. Class I subfamily.</text>
</comment>
<evidence type="ECO:0000255" key="1">
    <source>
        <dbReference type="HAMAP-Rule" id="MF_00583"/>
    </source>
</evidence>
<feature type="chain" id="PRO_0000141155" description="Ribose-phosphate pyrophosphokinase 1">
    <location>
        <begin position="1"/>
        <end position="318"/>
    </location>
</feature>
<feature type="active site" evidence="1">
    <location>
        <position position="199"/>
    </location>
</feature>
<feature type="binding site" evidence="1">
    <location>
        <begin position="43"/>
        <end position="45"/>
    </location>
    <ligand>
        <name>ATP</name>
        <dbReference type="ChEBI" id="CHEBI:30616"/>
    </ligand>
</feature>
<feature type="binding site" evidence="1">
    <location>
        <begin position="102"/>
        <end position="103"/>
    </location>
    <ligand>
        <name>ATP</name>
        <dbReference type="ChEBI" id="CHEBI:30616"/>
    </ligand>
</feature>
<feature type="binding site" evidence="1">
    <location>
        <position position="136"/>
    </location>
    <ligand>
        <name>Mg(2+)</name>
        <dbReference type="ChEBI" id="CHEBI:18420"/>
        <label>1</label>
    </ligand>
</feature>
<feature type="binding site" evidence="1">
    <location>
        <position position="176"/>
    </location>
    <ligand>
        <name>Mg(2+)</name>
        <dbReference type="ChEBI" id="CHEBI:18420"/>
        <label>2</label>
    </ligand>
</feature>
<feature type="binding site" evidence="1">
    <location>
        <position position="201"/>
    </location>
    <ligand>
        <name>D-ribose 5-phosphate</name>
        <dbReference type="ChEBI" id="CHEBI:78346"/>
    </ligand>
</feature>
<feature type="binding site" evidence="1">
    <location>
        <position position="225"/>
    </location>
    <ligand>
        <name>D-ribose 5-phosphate</name>
        <dbReference type="ChEBI" id="CHEBI:78346"/>
    </ligand>
</feature>
<feature type="binding site" evidence="1">
    <location>
        <begin position="229"/>
        <end position="233"/>
    </location>
    <ligand>
        <name>D-ribose 5-phosphate</name>
        <dbReference type="ChEBI" id="CHEBI:78346"/>
    </ligand>
</feature>
<reference key="1">
    <citation type="journal article" date="2004" name="Nucleic Acids Res.">
        <title>Whole genome comparisons of serotype 4b and 1/2a strains of the food-borne pathogen Listeria monocytogenes reveal new insights into the core genome components of this species.</title>
        <authorList>
            <person name="Nelson K.E."/>
            <person name="Fouts D.E."/>
            <person name="Mongodin E.F."/>
            <person name="Ravel J."/>
            <person name="DeBoy R.T."/>
            <person name="Kolonay J.F."/>
            <person name="Rasko D.A."/>
            <person name="Angiuoli S.V."/>
            <person name="Gill S.R."/>
            <person name="Paulsen I.T."/>
            <person name="Peterson J.D."/>
            <person name="White O."/>
            <person name="Nelson W.C."/>
            <person name="Nierman W.C."/>
            <person name="Beanan M.J."/>
            <person name="Brinkac L.M."/>
            <person name="Daugherty S.C."/>
            <person name="Dodson R.J."/>
            <person name="Durkin A.S."/>
            <person name="Madupu R."/>
            <person name="Haft D.H."/>
            <person name="Selengut J."/>
            <person name="Van Aken S.E."/>
            <person name="Khouri H.M."/>
            <person name="Fedorova N."/>
            <person name="Forberger H.A."/>
            <person name="Tran B."/>
            <person name="Kathariou S."/>
            <person name="Wonderling L.D."/>
            <person name="Uhlich G.A."/>
            <person name="Bayles D.O."/>
            <person name="Luchansky J.B."/>
            <person name="Fraser C.M."/>
        </authorList>
    </citation>
    <scope>NUCLEOTIDE SEQUENCE [LARGE SCALE GENOMIC DNA]</scope>
    <source>
        <strain>F2365</strain>
    </source>
</reference>
<gene>
    <name evidence="1" type="primary">prs1</name>
    <name type="ordered locus">LMOf2365_0210</name>
</gene>
<protein>
    <recommendedName>
        <fullName evidence="1">Ribose-phosphate pyrophosphokinase 1</fullName>
        <shortName evidence="1">RPPK 1</shortName>
        <ecNumber evidence="1">2.7.6.1</ecNumber>
    </recommendedName>
    <alternativeName>
        <fullName evidence="1">5-phospho-D-ribosyl alpha-1-diphosphate synthase 1</fullName>
    </alternativeName>
    <alternativeName>
        <fullName evidence="1">Phosphoribosyl diphosphate synthase 1</fullName>
    </alternativeName>
    <alternativeName>
        <fullName evidence="1">Phosphoribosyl pyrophosphate synthase 1</fullName>
        <shortName evidence="1">P-Rib-PP synthase 1</shortName>
        <shortName evidence="1">PRPP synthase 1</shortName>
        <shortName evidence="1">PRPPase 1</shortName>
    </alternativeName>
</protein>
<keyword id="KW-0067">ATP-binding</keyword>
<keyword id="KW-0963">Cytoplasm</keyword>
<keyword id="KW-0418">Kinase</keyword>
<keyword id="KW-0460">Magnesium</keyword>
<keyword id="KW-0479">Metal-binding</keyword>
<keyword id="KW-0545">Nucleotide biosynthesis</keyword>
<keyword id="KW-0547">Nucleotide-binding</keyword>
<keyword id="KW-0808">Transferase</keyword>
<accession>Q724L4</accession>
<organism>
    <name type="scientific">Listeria monocytogenes serotype 4b (strain F2365)</name>
    <dbReference type="NCBI Taxonomy" id="265669"/>
    <lineage>
        <taxon>Bacteria</taxon>
        <taxon>Bacillati</taxon>
        <taxon>Bacillota</taxon>
        <taxon>Bacilli</taxon>
        <taxon>Bacillales</taxon>
        <taxon>Listeriaceae</taxon>
        <taxon>Listeria</taxon>
    </lineage>
</organism>
<sequence>MSNEYFDPKLKIFSLNSNRELAEEIAKEVGIELGKSSVTHFSDGEIQINIEESIRGCHVYVIQSTSNPVNQNLMELLIMIDALKRASAATINIVMPYYGYARQDRKARSREPITAKLVANLIETAGATRMITLDMHAPQIQGFFDIPIDHLNAVRLLSDYFSERHLGDDLVVVSPDHGGVTRARKMADRLKAPIAIIDKRRPRPNVAEVMNIVGNVEGKVCIIIDDIIDTAGTITLAAKALREAGATKVYACCSHPVLSGPAMKRIEESPIEKLVVTNSIALPEEKWIDKMEQLSVAALLGEAIVRVHENASVSSLFE</sequence>
<proteinExistence type="inferred from homology"/>
<dbReference type="EC" id="2.7.6.1" evidence="1"/>
<dbReference type="EMBL" id="AE017262">
    <property type="protein sequence ID" value="AAT02997.1"/>
    <property type="molecule type" value="Genomic_DNA"/>
</dbReference>
<dbReference type="RefSeq" id="WP_003722728.1">
    <property type="nucleotide sequence ID" value="NC_002973.6"/>
</dbReference>
<dbReference type="SMR" id="Q724L4"/>
<dbReference type="KEGG" id="lmf:LMOf2365_0210"/>
<dbReference type="HOGENOM" id="CLU_033546_4_0_9"/>
<dbReference type="UniPathway" id="UPA00087">
    <property type="reaction ID" value="UER00172"/>
</dbReference>
<dbReference type="GO" id="GO:0005737">
    <property type="term" value="C:cytoplasm"/>
    <property type="evidence" value="ECO:0007669"/>
    <property type="project" value="UniProtKB-SubCell"/>
</dbReference>
<dbReference type="GO" id="GO:0002189">
    <property type="term" value="C:ribose phosphate diphosphokinase complex"/>
    <property type="evidence" value="ECO:0007669"/>
    <property type="project" value="TreeGrafter"/>
</dbReference>
<dbReference type="GO" id="GO:0005524">
    <property type="term" value="F:ATP binding"/>
    <property type="evidence" value="ECO:0007669"/>
    <property type="project" value="UniProtKB-KW"/>
</dbReference>
<dbReference type="GO" id="GO:0016301">
    <property type="term" value="F:kinase activity"/>
    <property type="evidence" value="ECO:0007669"/>
    <property type="project" value="UniProtKB-KW"/>
</dbReference>
<dbReference type="GO" id="GO:0000287">
    <property type="term" value="F:magnesium ion binding"/>
    <property type="evidence" value="ECO:0007669"/>
    <property type="project" value="UniProtKB-UniRule"/>
</dbReference>
<dbReference type="GO" id="GO:0004749">
    <property type="term" value="F:ribose phosphate diphosphokinase activity"/>
    <property type="evidence" value="ECO:0007669"/>
    <property type="project" value="UniProtKB-UniRule"/>
</dbReference>
<dbReference type="GO" id="GO:0006015">
    <property type="term" value="P:5-phosphoribose 1-diphosphate biosynthetic process"/>
    <property type="evidence" value="ECO:0007669"/>
    <property type="project" value="UniProtKB-UniRule"/>
</dbReference>
<dbReference type="GO" id="GO:0006164">
    <property type="term" value="P:purine nucleotide biosynthetic process"/>
    <property type="evidence" value="ECO:0007669"/>
    <property type="project" value="TreeGrafter"/>
</dbReference>
<dbReference type="GO" id="GO:0009156">
    <property type="term" value="P:ribonucleoside monophosphate biosynthetic process"/>
    <property type="evidence" value="ECO:0007669"/>
    <property type="project" value="InterPro"/>
</dbReference>
<dbReference type="CDD" id="cd06223">
    <property type="entry name" value="PRTases_typeI"/>
    <property type="match status" value="1"/>
</dbReference>
<dbReference type="FunFam" id="3.40.50.2020:FF:000007">
    <property type="entry name" value="Ribose-phosphate pyrophosphokinase"/>
    <property type="match status" value="1"/>
</dbReference>
<dbReference type="FunFam" id="3.40.50.2020:FF:000005">
    <property type="entry name" value="Ribose-phosphate pyrophosphokinase 1"/>
    <property type="match status" value="1"/>
</dbReference>
<dbReference type="Gene3D" id="3.40.50.2020">
    <property type="match status" value="2"/>
</dbReference>
<dbReference type="HAMAP" id="MF_00583_B">
    <property type="entry name" value="RibP_PPkinase_B"/>
    <property type="match status" value="1"/>
</dbReference>
<dbReference type="InterPro" id="IPR000842">
    <property type="entry name" value="PRib_PP_synth_CS"/>
</dbReference>
<dbReference type="InterPro" id="IPR029099">
    <property type="entry name" value="Pribosyltran_N"/>
</dbReference>
<dbReference type="InterPro" id="IPR000836">
    <property type="entry name" value="PRibTrfase_dom"/>
</dbReference>
<dbReference type="InterPro" id="IPR029057">
    <property type="entry name" value="PRTase-like"/>
</dbReference>
<dbReference type="InterPro" id="IPR005946">
    <property type="entry name" value="Rib-P_diPkinase"/>
</dbReference>
<dbReference type="InterPro" id="IPR037515">
    <property type="entry name" value="Rib-P_diPkinase_bac"/>
</dbReference>
<dbReference type="NCBIfam" id="NF002320">
    <property type="entry name" value="PRK01259.1"/>
    <property type="match status" value="1"/>
</dbReference>
<dbReference type="NCBIfam" id="NF002618">
    <property type="entry name" value="PRK02269.1"/>
    <property type="match status" value="1"/>
</dbReference>
<dbReference type="NCBIfam" id="TIGR01251">
    <property type="entry name" value="ribP_PPkin"/>
    <property type="match status" value="1"/>
</dbReference>
<dbReference type="PANTHER" id="PTHR10210">
    <property type="entry name" value="RIBOSE-PHOSPHATE DIPHOSPHOKINASE FAMILY MEMBER"/>
    <property type="match status" value="1"/>
</dbReference>
<dbReference type="PANTHER" id="PTHR10210:SF41">
    <property type="entry name" value="RIBOSE-PHOSPHATE PYROPHOSPHOKINASE 1, CHLOROPLASTIC"/>
    <property type="match status" value="1"/>
</dbReference>
<dbReference type="Pfam" id="PF14572">
    <property type="entry name" value="Pribosyl_synth"/>
    <property type="match status" value="1"/>
</dbReference>
<dbReference type="Pfam" id="PF13793">
    <property type="entry name" value="Pribosyltran_N"/>
    <property type="match status" value="1"/>
</dbReference>
<dbReference type="SMART" id="SM01400">
    <property type="entry name" value="Pribosyltran_N"/>
    <property type="match status" value="1"/>
</dbReference>
<dbReference type="SUPFAM" id="SSF53271">
    <property type="entry name" value="PRTase-like"/>
    <property type="match status" value="1"/>
</dbReference>
<dbReference type="PROSITE" id="PS00114">
    <property type="entry name" value="PRPP_SYNTHASE"/>
    <property type="match status" value="1"/>
</dbReference>
<name>KPRS1_LISMF</name>